<protein>
    <recommendedName>
        <fullName evidence="1">GTPase Obg</fullName>
        <ecNumber evidence="1">3.6.5.-</ecNumber>
    </recommendedName>
    <alternativeName>
        <fullName evidence="1">GTP-binding protein Obg</fullName>
    </alternativeName>
</protein>
<evidence type="ECO:0000255" key="1">
    <source>
        <dbReference type="HAMAP-Rule" id="MF_01454"/>
    </source>
</evidence>
<evidence type="ECO:0000255" key="2">
    <source>
        <dbReference type="PROSITE-ProRule" id="PRU01231"/>
    </source>
</evidence>
<evidence type="ECO:0000256" key="3">
    <source>
        <dbReference type="SAM" id="MobiDB-lite"/>
    </source>
</evidence>
<comment type="function">
    <text evidence="1">An essential GTPase which binds GTP, GDP and possibly (p)ppGpp with moderate affinity, with high nucleotide exchange rates and a fairly low GTP hydrolysis rate. Plays a role in control of the cell cycle, stress response, ribosome biogenesis and in those bacteria that undergo differentiation, in morphogenesis control.</text>
</comment>
<comment type="cofactor">
    <cofactor evidence="1">
        <name>Mg(2+)</name>
        <dbReference type="ChEBI" id="CHEBI:18420"/>
    </cofactor>
</comment>
<comment type="subunit">
    <text evidence="1">Monomer.</text>
</comment>
<comment type="subcellular location">
    <subcellularLocation>
        <location evidence="1">Cytoplasm</location>
    </subcellularLocation>
</comment>
<comment type="similarity">
    <text evidence="1">Belongs to the TRAFAC class OBG-HflX-like GTPase superfamily. OBG GTPase family.</text>
</comment>
<name>OBG_PSEA8</name>
<reference key="1">
    <citation type="journal article" date="2009" name="Genome Res.">
        <title>Newly introduced genomic prophage islands are critical determinants of in vivo competitiveness in the Liverpool epidemic strain of Pseudomonas aeruginosa.</title>
        <authorList>
            <person name="Winstanley C."/>
            <person name="Langille M.G.I."/>
            <person name="Fothergill J.L."/>
            <person name="Kukavica-Ibrulj I."/>
            <person name="Paradis-Bleau C."/>
            <person name="Sanschagrin F."/>
            <person name="Thomson N.R."/>
            <person name="Winsor G.L."/>
            <person name="Quail M.A."/>
            <person name="Lennard N."/>
            <person name="Bignell A."/>
            <person name="Clarke L."/>
            <person name="Seeger K."/>
            <person name="Saunders D."/>
            <person name="Harris D."/>
            <person name="Parkhill J."/>
            <person name="Hancock R.E.W."/>
            <person name="Brinkman F.S.L."/>
            <person name="Levesque R.C."/>
        </authorList>
    </citation>
    <scope>NUCLEOTIDE SEQUENCE [LARGE SCALE GENOMIC DNA]</scope>
    <source>
        <strain>LESB58</strain>
    </source>
</reference>
<feature type="chain" id="PRO_0000386151" description="GTPase Obg">
    <location>
        <begin position="1"/>
        <end position="406"/>
    </location>
</feature>
<feature type="domain" description="Obg" evidence="2">
    <location>
        <begin position="1"/>
        <end position="159"/>
    </location>
</feature>
<feature type="domain" description="OBG-type G" evidence="1">
    <location>
        <begin position="160"/>
        <end position="334"/>
    </location>
</feature>
<feature type="region of interest" description="Disordered" evidence="3">
    <location>
        <begin position="127"/>
        <end position="148"/>
    </location>
</feature>
<feature type="region of interest" description="Disordered" evidence="3">
    <location>
        <begin position="382"/>
        <end position="406"/>
    </location>
</feature>
<feature type="compositionally biased region" description="Polar residues" evidence="3">
    <location>
        <begin position="129"/>
        <end position="143"/>
    </location>
</feature>
<feature type="compositionally biased region" description="Acidic residues" evidence="3">
    <location>
        <begin position="385"/>
        <end position="399"/>
    </location>
</feature>
<feature type="binding site" evidence="1">
    <location>
        <begin position="166"/>
        <end position="173"/>
    </location>
    <ligand>
        <name>GTP</name>
        <dbReference type="ChEBI" id="CHEBI:37565"/>
    </ligand>
</feature>
<feature type="binding site" evidence="1">
    <location>
        <position position="173"/>
    </location>
    <ligand>
        <name>Mg(2+)</name>
        <dbReference type="ChEBI" id="CHEBI:18420"/>
    </ligand>
</feature>
<feature type="binding site" evidence="1">
    <location>
        <begin position="191"/>
        <end position="195"/>
    </location>
    <ligand>
        <name>GTP</name>
        <dbReference type="ChEBI" id="CHEBI:37565"/>
    </ligand>
</feature>
<feature type="binding site" evidence="1">
    <location>
        <position position="193"/>
    </location>
    <ligand>
        <name>Mg(2+)</name>
        <dbReference type="ChEBI" id="CHEBI:18420"/>
    </ligand>
</feature>
<feature type="binding site" evidence="1">
    <location>
        <begin position="213"/>
        <end position="216"/>
    </location>
    <ligand>
        <name>GTP</name>
        <dbReference type="ChEBI" id="CHEBI:37565"/>
    </ligand>
</feature>
<feature type="binding site" evidence="1">
    <location>
        <begin position="283"/>
        <end position="286"/>
    </location>
    <ligand>
        <name>GTP</name>
        <dbReference type="ChEBI" id="CHEBI:37565"/>
    </ligand>
</feature>
<feature type="binding site" evidence="1">
    <location>
        <begin position="315"/>
        <end position="317"/>
    </location>
    <ligand>
        <name>GTP</name>
        <dbReference type="ChEBI" id="CHEBI:37565"/>
    </ligand>
</feature>
<gene>
    <name evidence="1" type="primary">obg</name>
    <name type="ordered locus">PLES_49491</name>
</gene>
<sequence length="406" mass="44339">MKFVDEVSIHVKAGDGGNGLMSFRREKFIEKGGPNGGDGGDGGSIYLEADVNLNTLVDYRYTRRFDAQRGENGGSKDCTGAKGDDLILPVPVGTTVIDANTQEIIGDLTEPGQRLMVAQGGWHGLGNTRFKSSTNRAPRQTTPGKPGEARDLKLELKVLADVGLLGLPNAGKSTFIRAVSAAKPKVADYPFTTLVPNLGVVSVGRYKSFVVADIPGLIEGAAEGAGLGIRFLKHLARTRILLHLVDMAPLDESDPADAAEVIVRELGRFSPALTERERWLVLNKMDQILDPAEREARKQAVIERLGWEGPVYVISALERDGTEALSQDIMRYLDERTLRLEEDPQYAEELAELDRRIEDEARARLQALDDARALRRSGLKNAGAVDDDDFDDEEDDGDGPEIFYVP</sequence>
<dbReference type="EC" id="3.6.5.-" evidence="1"/>
<dbReference type="EMBL" id="FM209186">
    <property type="protein sequence ID" value="CAW29703.1"/>
    <property type="molecule type" value="Genomic_DNA"/>
</dbReference>
<dbReference type="SMR" id="B7V0A9"/>
<dbReference type="KEGG" id="pag:PLES_49491"/>
<dbReference type="HOGENOM" id="CLU_011747_2_0_6"/>
<dbReference type="GO" id="GO:0005737">
    <property type="term" value="C:cytoplasm"/>
    <property type="evidence" value="ECO:0007669"/>
    <property type="project" value="UniProtKB-SubCell"/>
</dbReference>
<dbReference type="GO" id="GO:0005525">
    <property type="term" value="F:GTP binding"/>
    <property type="evidence" value="ECO:0007669"/>
    <property type="project" value="UniProtKB-UniRule"/>
</dbReference>
<dbReference type="GO" id="GO:0003924">
    <property type="term" value="F:GTPase activity"/>
    <property type="evidence" value="ECO:0007669"/>
    <property type="project" value="UniProtKB-UniRule"/>
</dbReference>
<dbReference type="GO" id="GO:0000287">
    <property type="term" value="F:magnesium ion binding"/>
    <property type="evidence" value="ECO:0007669"/>
    <property type="project" value="InterPro"/>
</dbReference>
<dbReference type="GO" id="GO:0042254">
    <property type="term" value="P:ribosome biogenesis"/>
    <property type="evidence" value="ECO:0007669"/>
    <property type="project" value="UniProtKB-UniRule"/>
</dbReference>
<dbReference type="CDD" id="cd01898">
    <property type="entry name" value="Obg"/>
    <property type="match status" value="1"/>
</dbReference>
<dbReference type="FunFam" id="2.70.210.12:FF:000001">
    <property type="entry name" value="GTPase Obg"/>
    <property type="match status" value="1"/>
</dbReference>
<dbReference type="FunFam" id="3.40.50.300:FF:000185">
    <property type="entry name" value="GTPase Obg"/>
    <property type="match status" value="1"/>
</dbReference>
<dbReference type="Gene3D" id="2.70.210.12">
    <property type="entry name" value="GTP1/OBG domain"/>
    <property type="match status" value="1"/>
</dbReference>
<dbReference type="Gene3D" id="3.40.50.300">
    <property type="entry name" value="P-loop containing nucleotide triphosphate hydrolases"/>
    <property type="match status" value="1"/>
</dbReference>
<dbReference type="HAMAP" id="MF_01454">
    <property type="entry name" value="GTPase_Obg"/>
    <property type="match status" value="1"/>
</dbReference>
<dbReference type="InterPro" id="IPR031167">
    <property type="entry name" value="G_OBG"/>
</dbReference>
<dbReference type="InterPro" id="IPR006073">
    <property type="entry name" value="GTP-bd"/>
</dbReference>
<dbReference type="InterPro" id="IPR014100">
    <property type="entry name" value="GTP-bd_Obg/CgtA"/>
</dbReference>
<dbReference type="InterPro" id="IPR006074">
    <property type="entry name" value="GTP1-OBG_CS"/>
</dbReference>
<dbReference type="InterPro" id="IPR006169">
    <property type="entry name" value="GTP1_OBG_dom"/>
</dbReference>
<dbReference type="InterPro" id="IPR036726">
    <property type="entry name" value="GTP1_OBG_dom_sf"/>
</dbReference>
<dbReference type="InterPro" id="IPR045086">
    <property type="entry name" value="OBG_GTPase"/>
</dbReference>
<dbReference type="InterPro" id="IPR027417">
    <property type="entry name" value="P-loop_NTPase"/>
</dbReference>
<dbReference type="NCBIfam" id="TIGR02729">
    <property type="entry name" value="Obg_CgtA"/>
    <property type="match status" value="1"/>
</dbReference>
<dbReference type="NCBIfam" id="NF008955">
    <property type="entry name" value="PRK12297.1"/>
    <property type="match status" value="1"/>
</dbReference>
<dbReference type="NCBIfam" id="NF008956">
    <property type="entry name" value="PRK12299.1"/>
    <property type="match status" value="1"/>
</dbReference>
<dbReference type="PANTHER" id="PTHR11702">
    <property type="entry name" value="DEVELOPMENTALLY REGULATED GTP-BINDING PROTEIN-RELATED"/>
    <property type="match status" value="1"/>
</dbReference>
<dbReference type="PANTHER" id="PTHR11702:SF31">
    <property type="entry name" value="MITOCHONDRIAL RIBOSOME-ASSOCIATED GTPASE 2"/>
    <property type="match status" value="1"/>
</dbReference>
<dbReference type="Pfam" id="PF01018">
    <property type="entry name" value="GTP1_OBG"/>
    <property type="match status" value="1"/>
</dbReference>
<dbReference type="Pfam" id="PF01926">
    <property type="entry name" value="MMR_HSR1"/>
    <property type="match status" value="1"/>
</dbReference>
<dbReference type="PIRSF" id="PIRSF002401">
    <property type="entry name" value="GTP_bd_Obg/CgtA"/>
    <property type="match status" value="1"/>
</dbReference>
<dbReference type="PRINTS" id="PR00326">
    <property type="entry name" value="GTP1OBG"/>
</dbReference>
<dbReference type="SUPFAM" id="SSF82051">
    <property type="entry name" value="Obg GTP-binding protein N-terminal domain"/>
    <property type="match status" value="1"/>
</dbReference>
<dbReference type="SUPFAM" id="SSF52540">
    <property type="entry name" value="P-loop containing nucleoside triphosphate hydrolases"/>
    <property type="match status" value="1"/>
</dbReference>
<dbReference type="PROSITE" id="PS51710">
    <property type="entry name" value="G_OBG"/>
    <property type="match status" value="1"/>
</dbReference>
<dbReference type="PROSITE" id="PS00905">
    <property type="entry name" value="GTP1_OBG"/>
    <property type="match status" value="1"/>
</dbReference>
<dbReference type="PROSITE" id="PS51883">
    <property type="entry name" value="OBG"/>
    <property type="match status" value="1"/>
</dbReference>
<organism>
    <name type="scientific">Pseudomonas aeruginosa (strain LESB58)</name>
    <dbReference type="NCBI Taxonomy" id="557722"/>
    <lineage>
        <taxon>Bacteria</taxon>
        <taxon>Pseudomonadati</taxon>
        <taxon>Pseudomonadota</taxon>
        <taxon>Gammaproteobacteria</taxon>
        <taxon>Pseudomonadales</taxon>
        <taxon>Pseudomonadaceae</taxon>
        <taxon>Pseudomonas</taxon>
    </lineage>
</organism>
<keyword id="KW-0963">Cytoplasm</keyword>
<keyword id="KW-0342">GTP-binding</keyword>
<keyword id="KW-0378">Hydrolase</keyword>
<keyword id="KW-0460">Magnesium</keyword>
<keyword id="KW-0479">Metal-binding</keyword>
<keyword id="KW-0547">Nucleotide-binding</keyword>
<accession>B7V0A9</accession>
<proteinExistence type="inferred from homology"/>